<sequence>MRILLAEDDLLLGDGIRAGLRLEGDTVEWVTDGVAAENALVTDEFDLLVLDIGLPRRSGLDILRNLRHQGLLTPVLLLTARDKVADRVAGLDSGADDYLTKPFDLDELQARVRALTRRTTGRALPQLVHGELRLDPATHQVTLSGQAVELAPREYALLRLLLENSGKVLSRNQLEQSLYGWSGDVESNAIEVHVHHLRRKLGNQLIRTVRGIGYGIDQPAP</sequence>
<name>PMRA_PSEAE</name>
<evidence type="ECO:0000255" key="1">
    <source>
        <dbReference type="PROSITE-ProRule" id="PRU00169"/>
    </source>
</evidence>
<evidence type="ECO:0000255" key="2">
    <source>
        <dbReference type="PROSITE-ProRule" id="PRU01091"/>
    </source>
</evidence>
<evidence type="ECO:0000269" key="3">
    <source>
    </source>
</evidence>
<evidence type="ECO:0000269" key="4">
    <source>
    </source>
</evidence>
<evidence type="ECO:0000269" key="5">
    <source>
    </source>
</evidence>
<evidence type="ECO:0000303" key="6">
    <source>
    </source>
</evidence>
<evidence type="ECO:0000305" key="7"/>
<dbReference type="EMBL" id="AE004091">
    <property type="protein sequence ID" value="AAG08162.1"/>
    <property type="molecule type" value="Genomic_DNA"/>
</dbReference>
<dbReference type="PIR" id="F83048">
    <property type="entry name" value="F83048"/>
</dbReference>
<dbReference type="RefSeq" id="NP_253464.1">
    <property type="nucleotide sequence ID" value="NC_002516.2"/>
</dbReference>
<dbReference type="RefSeq" id="WP_003102236.1">
    <property type="nucleotide sequence ID" value="NZ_QZGE01000018.1"/>
</dbReference>
<dbReference type="SMR" id="Q9HV32"/>
<dbReference type="FunCoup" id="Q9HV32">
    <property type="interactions" value="318"/>
</dbReference>
<dbReference type="STRING" id="208964.PA4776"/>
<dbReference type="PaxDb" id="208964-PA4776"/>
<dbReference type="GeneID" id="881834"/>
<dbReference type="KEGG" id="pae:PA4776"/>
<dbReference type="PATRIC" id="fig|208964.12.peg.5003"/>
<dbReference type="PseudoCAP" id="PA4776"/>
<dbReference type="HOGENOM" id="CLU_000445_30_1_6"/>
<dbReference type="InParanoid" id="Q9HV32"/>
<dbReference type="OrthoDB" id="9802426at2"/>
<dbReference type="PhylomeDB" id="Q9HV32"/>
<dbReference type="BioCyc" id="PAER208964:G1FZ6-4889-MONOMER"/>
<dbReference type="Proteomes" id="UP000002438">
    <property type="component" value="Chromosome"/>
</dbReference>
<dbReference type="GO" id="GO:0005829">
    <property type="term" value="C:cytosol"/>
    <property type="evidence" value="ECO:0000318"/>
    <property type="project" value="GO_Central"/>
</dbReference>
<dbReference type="GO" id="GO:0032993">
    <property type="term" value="C:protein-DNA complex"/>
    <property type="evidence" value="ECO:0000318"/>
    <property type="project" value="GO_Central"/>
</dbReference>
<dbReference type="GO" id="GO:0000156">
    <property type="term" value="F:phosphorelay response regulator activity"/>
    <property type="evidence" value="ECO:0000318"/>
    <property type="project" value="GO_Central"/>
</dbReference>
<dbReference type="GO" id="GO:0000976">
    <property type="term" value="F:transcription cis-regulatory region binding"/>
    <property type="evidence" value="ECO:0000318"/>
    <property type="project" value="GO_Central"/>
</dbReference>
<dbReference type="GO" id="GO:0000160">
    <property type="term" value="P:phosphorelay signal transduction system"/>
    <property type="evidence" value="ECO:0000314"/>
    <property type="project" value="PseudoCAP"/>
</dbReference>
<dbReference type="GO" id="GO:0006355">
    <property type="term" value="P:regulation of DNA-templated transcription"/>
    <property type="evidence" value="ECO:0000318"/>
    <property type="project" value="GO_Central"/>
</dbReference>
<dbReference type="CDD" id="cd17624">
    <property type="entry name" value="REC_OmpR_PmrA-like"/>
    <property type="match status" value="1"/>
</dbReference>
<dbReference type="CDD" id="cd00383">
    <property type="entry name" value="trans_reg_C"/>
    <property type="match status" value="1"/>
</dbReference>
<dbReference type="FunFam" id="3.40.50.2300:FF:000002">
    <property type="entry name" value="DNA-binding response regulator PhoP"/>
    <property type="match status" value="1"/>
</dbReference>
<dbReference type="FunFam" id="1.10.10.10:FF:000005">
    <property type="entry name" value="Two-component system response regulator"/>
    <property type="match status" value="1"/>
</dbReference>
<dbReference type="Gene3D" id="3.40.50.2300">
    <property type="match status" value="1"/>
</dbReference>
<dbReference type="Gene3D" id="6.10.250.690">
    <property type="match status" value="1"/>
</dbReference>
<dbReference type="Gene3D" id="1.10.10.10">
    <property type="entry name" value="Winged helix-like DNA-binding domain superfamily/Winged helix DNA-binding domain"/>
    <property type="match status" value="1"/>
</dbReference>
<dbReference type="InterPro" id="IPR011006">
    <property type="entry name" value="CheY-like_superfamily"/>
</dbReference>
<dbReference type="InterPro" id="IPR001867">
    <property type="entry name" value="OmpR/PhoB-type_DNA-bd"/>
</dbReference>
<dbReference type="InterPro" id="IPR016032">
    <property type="entry name" value="Sig_transdc_resp-reg_C-effctor"/>
</dbReference>
<dbReference type="InterPro" id="IPR001789">
    <property type="entry name" value="Sig_transdc_resp-reg_receiver"/>
</dbReference>
<dbReference type="InterPro" id="IPR039420">
    <property type="entry name" value="WalR-like"/>
</dbReference>
<dbReference type="InterPro" id="IPR036388">
    <property type="entry name" value="WH-like_DNA-bd_sf"/>
</dbReference>
<dbReference type="PANTHER" id="PTHR48111">
    <property type="entry name" value="REGULATOR OF RPOS"/>
    <property type="match status" value="1"/>
</dbReference>
<dbReference type="PANTHER" id="PTHR48111:SF35">
    <property type="entry name" value="TRANSCRIPTIONAL REGULATORY PROTEIN QSEB"/>
    <property type="match status" value="1"/>
</dbReference>
<dbReference type="Pfam" id="PF00072">
    <property type="entry name" value="Response_reg"/>
    <property type="match status" value="1"/>
</dbReference>
<dbReference type="Pfam" id="PF00486">
    <property type="entry name" value="Trans_reg_C"/>
    <property type="match status" value="1"/>
</dbReference>
<dbReference type="SMART" id="SM00448">
    <property type="entry name" value="REC"/>
    <property type="match status" value="1"/>
</dbReference>
<dbReference type="SMART" id="SM00862">
    <property type="entry name" value="Trans_reg_C"/>
    <property type="match status" value="1"/>
</dbReference>
<dbReference type="SUPFAM" id="SSF46894">
    <property type="entry name" value="C-terminal effector domain of the bipartite response regulators"/>
    <property type="match status" value="1"/>
</dbReference>
<dbReference type="SUPFAM" id="SSF52172">
    <property type="entry name" value="CheY-like"/>
    <property type="match status" value="1"/>
</dbReference>
<dbReference type="PROSITE" id="PS51755">
    <property type="entry name" value="OMPR_PHOB"/>
    <property type="match status" value="1"/>
</dbReference>
<dbReference type="PROSITE" id="PS50110">
    <property type="entry name" value="RESPONSE_REGULATORY"/>
    <property type="match status" value="1"/>
</dbReference>
<organism>
    <name type="scientific">Pseudomonas aeruginosa (strain ATCC 15692 / DSM 22644 / CIP 104116 / JCM 14847 / LMG 12228 / 1C / PRS 101 / PAO1)</name>
    <dbReference type="NCBI Taxonomy" id="208964"/>
    <lineage>
        <taxon>Bacteria</taxon>
        <taxon>Pseudomonadati</taxon>
        <taxon>Pseudomonadota</taxon>
        <taxon>Gammaproteobacteria</taxon>
        <taxon>Pseudomonadales</taxon>
        <taxon>Pseudomonadaceae</taxon>
        <taxon>Pseudomonas</taxon>
    </lineage>
</organism>
<keyword id="KW-0963">Cytoplasm</keyword>
<keyword id="KW-0238">DNA-binding</keyword>
<keyword id="KW-0597">Phosphoprotein</keyword>
<keyword id="KW-1185">Reference proteome</keyword>
<keyword id="KW-0804">Transcription</keyword>
<keyword id="KW-0805">Transcription regulation</keyword>
<keyword id="KW-0902">Two-component regulatory system</keyword>
<reference key="1">
    <citation type="journal article" date="2000" name="Nature">
        <title>Complete genome sequence of Pseudomonas aeruginosa PAO1, an opportunistic pathogen.</title>
        <authorList>
            <person name="Stover C.K."/>
            <person name="Pham X.-Q.T."/>
            <person name="Erwin A.L."/>
            <person name="Mizoguchi S.D."/>
            <person name="Warrener P."/>
            <person name="Hickey M.J."/>
            <person name="Brinkman F.S.L."/>
            <person name="Hufnagle W.O."/>
            <person name="Kowalik D.J."/>
            <person name="Lagrou M."/>
            <person name="Garber R.L."/>
            <person name="Goltry L."/>
            <person name="Tolentino E."/>
            <person name="Westbrock-Wadman S."/>
            <person name="Yuan Y."/>
            <person name="Brody L.L."/>
            <person name="Coulter S.N."/>
            <person name="Folger K.R."/>
            <person name="Kas A."/>
            <person name="Larbig K."/>
            <person name="Lim R.M."/>
            <person name="Smith K.A."/>
            <person name="Spencer D.H."/>
            <person name="Wong G.K.-S."/>
            <person name="Wu Z."/>
            <person name="Paulsen I.T."/>
            <person name="Reizer J."/>
            <person name="Saier M.H. Jr."/>
            <person name="Hancock R.E.W."/>
            <person name="Lory S."/>
            <person name="Olson M.V."/>
        </authorList>
    </citation>
    <scope>NUCLEOTIDE SEQUENCE [LARGE SCALE GENOMIC DNA]</scope>
    <source>
        <strain>ATCC 15692 / DSM 22644 / CIP 104116 / JCM 14847 / LMG 12228 / 1C / PRS 101 / PAO1</strain>
    </source>
</reference>
<reference key="2">
    <citation type="journal article" date="2003" name="Mol. Microbiol.">
        <title>Cationic antimicrobial peptides activate a two-component regulatory system, PmrA-PmrB, that regulates resistance to polymyxin B and cationic antimicrobial peptides in Pseudomonas aeruginosa.</title>
        <authorList>
            <person name="McPhee J.B."/>
            <person name="Lewenza S."/>
            <person name="Hancock R.E."/>
        </authorList>
    </citation>
    <scope>FUNCTION</scope>
    <scope>INDUCTION BY CATIONIC ANTIMICROBIAL PEPTIDES</scope>
</reference>
<reference key="3">
    <citation type="journal article" date="2006" name="J. Bacteriol.">
        <title>Contribution of the PhoP-PhoQ and PmrA-PmrB two-component regulatory systems to Mg2+-induced gene regulation in Pseudomonas aeruginosa.</title>
        <authorList>
            <person name="McPhee J.B."/>
            <person name="Bains M."/>
            <person name="Winsor G."/>
            <person name="Lewenza S."/>
            <person name="Kwasnicka A."/>
            <person name="Brazas M.D."/>
            <person name="Brinkman F.S."/>
            <person name="Hancock R.E."/>
        </authorList>
    </citation>
    <scope>FUNCTION</scope>
    <scope>DISRUPTION PHENOTYPE</scope>
    <scope>DNA-BINDING</scope>
</reference>
<reference key="4">
    <citation type="journal article" date="2017" name="Front. Microbiol.">
        <title>PmrA/PmrB Two-Component System Regulation of lipA Expression in Pseudomonas aeruginosa PAO1.</title>
        <authorList>
            <person name="Liu W."/>
            <person name="Li M."/>
            <person name="Jiao L."/>
            <person name="Wang P."/>
            <person name="Yan Y."/>
        </authorList>
    </citation>
    <scope>FUNCTION</scope>
    <scope>DISRUPTION PHENOTYPE</scope>
    <scope>DNA-BINDING</scope>
    <source>
        <strain>ATCC 15692 / DSM 22644 / CIP 104116 / JCM 14847 / LMG 12228 / 1C / PRS 101 / PAO1</strain>
    </source>
</reference>
<feature type="chain" id="PRO_0000449418" description="Response regulator protein PmrA">
    <location>
        <begin position="1"/>
        <end position="221"/>
    </location>
</feature>
<feature type="domain" description="Response regulatory" evidence="1">
    <location>
        <begin position="2"/>
        <end position="116"/>
    </location>
</feature>
<feature type="DNA-binding region" description="OmpR/PhoB-type" evidence="2">
    <location>
        <begin position="124"/>
        <end position="218"/>
    </location>
</feature>
<feature type="modified residue" description="4-aspartylphosphate" evidence="1">
    <location>
        <position position="51"/>
    </location>
</feature>
<proteinExistence type="evidence at protein level"/>
<gene>
    <name type="primary">pmrA</name>
    <name type="ordered locus">PA4776</name>
</gene>
<comment type="function">
    <text evidence="3 4 5">Member of the two-component regulatory system PmrA/PmrB that plays a role in the regulation of resistance towards polymyxin B and cationic antimicrobial peptides in response to limiting concentrations of Mg(2+) (PubMed:14507375). Functions as a transcriptional activator by direct binding to a cis-acting sequence upstream of the target gene promoters including lipase lipA and pmrH promoters (PubMed:16707691, PubMed:29379484). Also autoregulates its own pmrAB operon under Mg(2+)-limiting conditions (PubMed:14507375, PubMed:16707691).</text>
</comment>
<comment type="subcellular location">
    <subcellularLocation>
        <location evidence="7">Cytoplasm</location>
    </subcellularLocation>
</comment>
<comment type="induction">
    <text evidence="3">By cationic antimicrobial peptides and by Mg(2+)-limiting conditions.</text>
</comment>
<comment type="disruption phenotype">
    <text evidence="4">Deletion leads to transcriptional alteration of multiple genes including a large number of genes involved in metal transport, such as the feoAB operon involved in ferrous iron uptake and the mgtE and mgtA operons involved in Mg(2+) transport.</text>
</comment>
<protein>
    <recommendedName>
        <fullName evidence="6">Response regulator protein PmrA</fullName>
    </recommendedName>
</protein>
<accession>Q9HV32</accession>